<accession>A5H8G4</accession>
<accession>Q9FEQ9</accession>
<sequence>MAKESKLTAGVAAALTVVAACALCLLLPATARAQLRVGFYDTSCPNAEALVRQAVAAAFAKDAGIAAGLIRLHFHDCFVRGCDGSVLLTVNPGGGQTERDALPNNPSLRGFDVIDAAKTAVEQSCPRTVSCADIVAFAARDSISLTGSVSYQVPAGRRDGRVSNATETVDLPPPTSTAQSLTDLFKAKELSVEDMVVLSGAHTVGRSFCASFFKRVWNTSTNPATAIVDAGLSPSYAQLLRALCPSNTTQTTPITTAMDPGTPNVLDNNYYKLLPRGMGLFFSDNQLRVNPQMAALVSSFASNETLWKEKFAAAMVKMGRIQVQTGTCGEVRLNCGVVNPSLYSSSSAVELGSSAPAAVGEEGYAAS</sequence>
<proteinExistence type="evidence at protein level"/>
<name>PER1_MAIZE</name>
<evidence type="ECO:0000255" key="1"/>
<evidence type="ECO:0000255" key="2">
    <source>
        <dbReference type="PROSITE-ProRule" id="PRU00297"/>
    </source>
</evidence>
<evidence type="ECO:0000255" key="3">
    <source>
        <dbReference type="PROSITE-ProRule" id="PRU10012"/>
    </source>
</evidence>
<evidence type="ECO:0000269" key="4">
    <source>
    </source>
</evidence>
<evidence type="ECO:0000269" key="5">
    <source>
    </source>
</evidence>
<evidence type="ECO:0000269" key="6">
    <source>
    </source>
</evidence>
<evidence type="ECO:0000305" key="7"/>
<organism>
    <name type="scientific">Zea mays</name>
    <name type="common">Maize</name>
    <dbReference type="NCBI Taxonomy" id="4577"/>
    <lineage>
        <taxon>Eukaryota</taxon>
        <taxon>Viridiplantae</taxon>
        <taxon>Streptophyta</taxon>
        <taxon>Embryophyta</taxon>
        <taxon>Tracheophyta</taxon>
        <taxon>Spermatophyta</taxon>
        <taxon>Magnoliopsida</taxon>
        <taxon>Liliopsida</taxon>
        <taxon>Poales</taxon>
        <taxon>Poaceae</taxon>
        <taxon>PACMAD clade</taxon>
        <taxon>Panicoideae</taxon>
        <taxon>Andropogonodae</taxon>
        <taxon>Andropogoneae</taxon>
        <taxon>Tripsacinae</taxon>
        <taxon>Zea</taxon>
    </lineage>
</organism>
<feature type="signal peptide" evidence="1">
    <location>
        <begin position="1"/>
        <end position="33"/>
    </location>
</feature>
<feature type="chain" id="PRO_0000359402" description="Peroxidase 1">
    <location>
        <begin position="34"/>
        <end position="367"/>
    </location>
</feature>
<feature type="active site" description="Proton acceptor" evidence="2 3">
    <location>
        <position position="75"/>
    </location>
</feature>
<feature type="binding site" evidence="2">
    <location>
        <position position="76"/>
    </location>
    <ligand>
        <name>Ca(2+)</name>
        <dbReference type="ChEBI" id="CHEBI:29108"/>
        <label>1</label>
    </ligand>
</feature>
<feature type="binding site" evidence="2">
    <location>
        <position position="79"/>
    </location>
    <ligand>
        <name>Ca(2+)</name>
        <dbReference type="ChEBI" id="CHEBI:29108"/>
        <label>1</label>
    </ligand>
</feature>
<feature type="binding site" evidence="2">
    <location>
        <position position="81"/>
    </location>
    <ligand>
        <name>Ca(2+)</name>
        <dbReference type="ChEBI" id="CHEBI:29108"/>
        <label>1</label>
    </ligand>
</feature>
<feature type="binding site" evidence="2">
    <location>
        <position position="83"/>
    </location>
    <ligand>
        <name>Ca(2+)</name>
        <dbReference type="ChEBI" id="CHEBI:29108"/>
        <label>1</label>
    </ligand>
</feature>
<feature type="binding site" evidence="2">
    <location>
        <position position="85"/>
    </location>
    <ligand>
        <name>Ca(2+)</name>
        <dbReference type="ChEBI" id="CHEBI:29108"/>
        <label>1</label>
    </ligand>
</feature>
<feature type="binding site" evidence="2">
    <location>
        <position position="172"/>
    </location>
    <ligand>
        <name>substrate</name>
    </ligand>
</feature>
<feature type="binding site" description="axial binding residue" evidence="2">
    <location>
        <position position="202"/>
    </location>
    <ligand>
        <name>heme b</name>
        <dbReference type="ChEBI" id="CHEBI:60344"/>
    </ligand>
    <ligandPart>
        <name>Fe</name>
        <dbReference type="ChEBI" id="CHEBI:18248"/>
    </ligandPart>
</feature>
<feature type="binding site" evidence="2">
    <location>
        <position position="203"/>
    </location>
    <ligand>
        <name>Ca(2+)</name>
        <dbReference type="ChEBI" id="CHEBI:29108"/>
        <label>2</label>
    </ligand>
</feature>
<feature type="binding site" evidence="2">
    <location>
        <position position="259"/>
    </location>
    <ligand>
        <name>Ca(2+)</name>
        <dbReference type="ChEBI" id="CHEBI:29108"/>
        <label>2</label>
    </ligand>
</feature>
<feature type="binding site" evidence="2">
    <location>
        <position position="262"/>
    </location>
    <ligand>
        <name>Ca(2+)</name>
        <dbReference type="ChEBI" id="CHEBI:29108"/>
        <label>2</label>
    </ligand>
</feature>
<feature type="binding site" evidence="2">
    <location>
        <position position="267"/>
    </location>
    <ligand>
        <name>Ca(2+)</name>
        <dbReference type="ChEBI" id="CHEBI:29108"/>
        <label>2</label>
    </ligand>
</feature>
<feature type="site" description="Transition state stabilizer" evidence="2">
    <location>
        <position position="71"/>
    </location>
</feature>
<feature type="modified residue" description="Pyrrolidone carboxylic acid" evidence="2">
    <location>
        <position position="34"/>
    </location>
</feature>
<feature type="glycosylation site" description="N-linked (GlcNAc...) asparagine" evidence="1">
    <location>
        <position position="164"/>
    </location>
</feature>
<feature type="glycosylation site" description="N-linked (GlcNAc...) asparagine" evidence="1">
    <location>
        <position position="218"/>
    </location>
</feature>
<feature type="glycosylation site" description="N-linked (GlcNAc...) asparagine" evidence="1">
    <location>
        <position position="247"/>
    </location>
</feature>
<feature type="glycosylation site" description="N-linked (GlcNAc...) asparagine" evidence="1">
    <location>
        <position position="303"/>
    </location>
</feature>
<feature type="disulfide bond" evidence="2">
    <location>
        <begin position="44"/>
        <end position="125"/>
    </location>
</feature>
<feature type="disulfide bond" evidence="2">
    <location>
        <begin position="77"/>
        <end position="82"/>
    </location>
</feature>
<feature type="disulfide bond" evidence="2">
    <location>
        <begin position="131"/>
        <end position="335"/>
    </location>
</feature>
<feature type="disulfide bond" evidence="2">
    <location>
        <begin position="209"/>
        <end position="244"/>
    </location>
</feature>
<feature type="sequence conflict" description="In Ref. 1; CAC21391." evidence="7" ref="1">
    <original>LPRGM</original>
    <variation>PASRH</variation>
    <location>
        <begin position="274"/>
        <end position="278"/>
    </location>
</feature>
<feature type="sequence conflict" description="In Ref. 1; CAC21391." evidence="7" ref="1">
    <original>Q</original>
    <variation>P</variation>
    <location>
        <position position="286"/>
    </location>
</feature>
<feature type="sequence conflict" description="In Ref. 1; CAC21391." evidence="7" ref="1">
    <original>L</original>
    <variation>S</variation>
    <location>
        <position position="342"/>
    </location>
</feature>
<protein>
    <recommendedName>
        <fullName>Peroxidase 1</fullName>
        <ecNumber>1.11.1.7</ecNumber>
    </recommendedName>
    <alternativeName>
        <fullName>Plasma membrane-bound peroxidase 1</fullName>
        <shortName>pmPOX1</shortName>
    </alternativeName>
</protein>
<reference key="1">
    <citation type="journal article" date="2003" name="Gene">
        <title>Characterisation of maize peroxidases having differential patterns of mRNA accumulation in relation to lignifying tissues.</title>
        <authorList>
            <person name="de Obeso M."/>
            <person name="Caparros-Ruiz D."/>
            <person name="Vignols F."/>
            <person name="Puigdomenech P."/>
            <person name="Rigau J."/>
        </authorList>
    </citation>
    <scope>NUCLEOTIDE SEQUENCE [MRNA]</scope>
    <scope>TISSUE SPECIFICITY</scope>
    <source>
        <strain>cv. Wisconsin 64A</strain>
    </source>
</reference>
<reference key="2">
    <citation type="journal article" date="2008" name="J. Proteomics">
        <title>Membrane-bound class III peroxidases: identification, biochemical properties and sequence analysis of isoenzymes purified from maize (Zea mays L.) roots.</title>
        <authorList>
            <person name="Mika A."/>
            <person name="Buck F."/>
            <person name="Luethje S."/>
        </authorList>
    </citation>
    <scope>NUCLEOTIDE SEQUENCE [MRNA]</scope>
    <scope>IDENTIFICATION BY MASS SPECTROMETRY</scope>
    <scope>BIOPHYSICOCHEMICAL PROPERTIES</scope>
    <source>
        <strain>cv. Wisconsin 22</strain>
    </source>
</reference>
<reference key="3">
    <citation type="journal article" date="2003" name="Plant Physiol.">
        <title>Properties of guaiacol peroxidase activities isolated from corn root plasma membranes.</title>
        <authorList>
            <person name="Mika A."/>
            <person name="Luethje S."/>
        </authorList>
    </citation>
    <scope>FUNCTION</scope>
</reference>
<keyword id="KW-0106">Calcium</keyword>
<keyword id="KW-1015">Disulfide bond</keyword>
<keyword id="KW-0325">Glycoprotein</keyword>
<keyword id="KW-0349">Heme</keyword>
<keyword id="KW-0376">Hydrogen peroxide</keyword>
<keyword id="KW-0408">Iron</keyword>
<keyword id="KW-0479">Metal-binding</keyword>
<keyword id="KW-0560">Oxidoreductase</keyword>
<keyword id="KW-0575">Peroxidase</keyword>
<keyword id="KW-0873">Pyrrolidone carboxylic acid</keyword>
<keyword id="KW-1185">Reference proteome</keyword>
<keyword id="KW-0964">Secreted</keyword>
<keyword id="KW-0732">Signal</keyword>
<keyword id="KW-0926">Vacuole</keyword>
<gene>
    <name type="primary">PER1</name>
    <name type="synonym">POX1</name>
    <name type="synonym">PRX1</name>
</gene>
<comment type="function">
    <text evidence="2 5">Removal of H(2)O(2), oxidation of toxic reductants, biosynthesis and degradation of lignin, suberization, auxin catabolism, response to environmental stresses such as wounding, pathogen attack and oxidative stress. These functions might be dependent on each isozyme/isoform in each plant tissue.</text>
</comment>
<comment type="catalytic activity">
    <reaction>
        <text>2 a phenolic donor + H2O2 = 2 a phenolic radical donor + 2 H2O</text>
        <dbReference type="Rhea" id="RHEA:56136"/>
        <dbReference type="ChEBI" id="CHEBI:15377"/>
        <dbReference type="ChEBI" id="CHEBI:16240"/>
        <dbReference type="ChEBI" id="CHEBI:139520"/>
        <dbReference type="ChEBI" id="CHEBI:139521"/>
        <dbReference type="EC" id="1.11.1.7"/>
    </reaction>
</comment>
<comment type="cofactor">
    <cofactor evidence="2">
        <name>heme b</name>
        <dbReference type="ChEBI" id="CHEBI:60344"/>
    </cofactor>
    <text evidence="2">Binds 1 heme b (iron(II)-protoporphyrin IX) group per subunit.</text>
</comment>
<comment type="cofactor">
    <cofactor evidence="2">
        <name>Ca(2+)</name>
        <dbReference type="ChEBI" id="CHEBI:29108"/>
    </cofactor>
    <text evidence="2">Binds 2 calcium ions per subunit.</text>
</comment>
<comment type="biophysicochemical properties">
    <kinetics>
        <Vmax evidence="6">61.9 umol/min/mg enzyme with guaiacol as substrate</Vmax>
        <text>In the presence of H(2)O(2).</text>
    </kinetics>
</comment>
<comment type="subcellular location">
    <subcellularLocation>
        <location evidence="7">Secreted</location>
    </subcellularLocation>
    <subcellularLocation>
        <location evidence="7">Vacuole</location>
    </subcellularLocation>
    <text>Carboxy-terminal extension appears to target the protein to vacuoles.</text>
</comment>
<comment type="tissue specificity">
    <text evidence="4">Expressed in the root tip meristems.</text>
</comment>
<comment type="similarity">
    <text evidence="2">Belongs to the peroxidase family. Classical plant (class III) peroxidase subfamily.</text>
</comment>
<comment type="sequence caution" evidence="7">
    <conflict type="frameshift">
        <sequence resource="EMBL-CDS" id="CAC21391"/>
    </conflict>
</comment>
<dbReference type="EC" id="1.11.1.7"/>
<dbReference type="EMBL" id="AJ401274">
    <property type="protein sequence ID" value="CAC21391.1"/>
    <property type="status" value="ALT_FRAME"/>
    <property type="molecule type" value="mRNA"/>
</dbReference>
<dbReference type="EMBL" id="EF178277">
    <property type="protein sequence ID" value="ABN48856.1"/>
    <property type="molecule type" value="mRNA"/>
</dbReference>
<dbReference type="RefSeq" id="NP_001105144.1">
    <property type="nucleotide sequence ID" value="NM_001111674.1"/>
</dbReference>
<dbReference type="SMR" id="A5H8G4"/>
<dbReference type="FunCoup" id="A5H8G4">
    <property type="interactions" value="174"/>
</dbReference>
<dbReference type="STRING" id="4577.A5H8G4"/>
<dbReference type="PeroxiBase" id="739">
    <property type="entry name" value="ZmPrx01"/>
</dbReference>
<dbReference type="GlyCosmos" id="A5H8G4">
    <property type="glycosylation" value="4 sites, No reported glycans"/>
</dbReference>
<dbReference type="PaxDb" id="4577-GRMZM2G104394_P01"/>
<dbReference type="GeneID" id="542029"/>
<dbReference type="KEGG" id="zma:542029"/>
<dbReference type="eggNOG" id="ENOG502QPX7">
    <property type="taxonomic scope" value="Eukaryota"/>
</dbReference>
<dbReference type="InParanoid" id="A5H8G4"/>
<dbReference type="OrthoDB" id="2113341at2759"/>
<dbReference type="Proteomes" id="UP000007305">
    <property type="component" value="Unplaced"/>
</dbReference>
<dbReference type="ExpressionAtlas" id="A5H8G4">
    <property type="expression patterns" value="baseline and differential"/>
</dbReference>
<dbReference type="GO" id="GO:0005576">
    <property type="term" value="C:extracellular region"/>
    <property type="evidence" value="ECO:0007669"/>
    <property type="project" value="UniProtKB-SubCell"/>
</dbReference>
<dbReference type="GO" id="GO:0009505">
    <property type="term" value="C:plant-type cell wall"/>
    <property type="evidence" value="ECO:0000318"/>
    <property type="project" value="GO_Central"/>
</dbReference>
<dbReference type="GO" id="GO:0005773">
    <property type="term" value="C:vacuole"/>
    <property type="evidence" value="ECO:0007669"/>
    <property type="project" value="UniProtKB-SubCell"/>
</dbReference>
<dbReference type="GO" id="GO:0020037">
    <property type="term" value="F:heme binding"/>
    <property type="evidence" value="ECO:0007669"/>
    <property type="project" value="InterPro"/>
</dbReference>
<dbReference type="GO" id="GO:0140825">
    <property type="term" value="F:lactoperoxidase activity"/>
    <property type="evidence" value="ECO:0007669"/>
    <property type="project" value="UniProtKB-EC"/>
</dbReference>
<dbReference type="GO" id="GO:0046872">
    <property type="term" value="F:metal ion binding"/>
    <property type="evidence" value="ECO:0007669"/>
    <property type="project" value="UniProtKB-KW"/>
</dbReference>
<dbReference type="GO" id="GO:0004601">
    <property type="term" value="F:peroxidase activity"/>
    <property type="evidence" value="ECO:0000318"/>
    <property type="project" value="GO_Central"/>
</dbReference>
<dbReference type="GO" id="GO:0042744">
    <property type="term" value="P:hydrogen peroxide catabolic process"/>
    <property type="evidence" value="ECO:0007669"/>
    <property type="project" value="UniProtKB-KW"/>
</dbReference>
<dbReference type="GO" id="GO:0006979">
    <property type="term" value="P:response to oxidative stress"/>
    <property type="evidence" value="ECO:0007669"/>
    <property type="project" value="InterPro"/>
</dbReference>
<dbReference type="GO" id="GO:0006950">
    <property type="term" value="P:response to stress"/>
    <property type="evidence" value="ECO:0000318"/>
    <property type="project" value="GO_Central"/>
</dbReference>
<dbReference type="CDD" id="cd00693">
    <property type="entry name" value="secretory_peroxidase"/>
    <property type="match status" value="1"/>
</dbReference>
<dbReference type="FunFam" id="1.10.420.10:FF:000001">
    <property type="entry name" value="Peroxidase"/>
    <property type="match status" value="1"/>
</dbReference>
<dbReference type="FunFam" id="1.10.520.10:FF:000001">
    <property type="entry name" value="Peroxidase"/>
    <property type="match status" value="1"/>
</dbReference>
<dbReference type="Gene3D" id="1.10.520.10">
    <property type="match status" value="1"/>
</dbReference>
<dbReference type="Gene3D" id="1.10.420.10">
    <property type="entry name" value="Peroxidase, domain 2"/>
    <property type="match status" value="1"/>
</dbReference>
<dbReference type="InterPro" id="IPR002016">
    <property type="entry name" value="Haem_peroxidase"/>
</dbReference>
<dbReference type="InterPro" id="IPR010255">
    <property type="entry name" value="Haem_peroxidase_sf"/>
</dbReference>
<dbReference type="InterPro" id="IPR000823">
    <property type="entry name" value="Peroxidase_pln"/>
</dbReference>
<dbReference type="InterPro" id="IPR019794">
    <property type="entry name" value="Peroxidases_AS"/>
</dbReference>
<dbReference type="InterPro" id="IPR019793">
    <property type="entry name" value="Peroxidases_heam-ligand_BS"/>
</dbReference>
<dbReference type="InterPro" id="IPR033905">
    <property type="entry name" value="Secretory_peroxidase"/>
</dbReference>
<dbReference type="PANTHER" id="PTHR31517">
    <property type="match status" value="1"/>
</dbReference>
<dbReference type="PANTHER" id="PTHR31517:SF84">
    <property type="entry name" value="PEROXIDASE"/>
    <property type="match status" value="1"/>
</dbReference>
<dbReference type="Pfam" id="PF00141">
    <property type="entry name" value="peroxidase"/>
    <property type="match status" value="1"/>
</dbReference>
<dbReference type="PRINTS" id="PR00458">
    <property type="entry name" value="PEROXIDASE"/>
</dbReference>
<dbReference type="PRINTS" id="PR00461">
    <property type="entry name" value="PLPEROXIDASE"/>
</dbReference>
<dbReference type="SUPFAM" id="SSF48113">
    <property type="entry name" value="Heme-dependent peroxidases"/>
    <property type="match status" value="1"/>
</dbReference>
<dbReference type="PROSITE" id="PS00435">
    <property type="entry name" value="PEROXIDASE_1"/>
    <property type="match status" value="1"/>
</dbReference>
<dbReference type="PROSITE" id="PS00436">
    <property type="entry name" value="PEROXIDASE_2"/>
    <property type="match status" value="1"/>
</dbReference>
<dbReference type="PROSITE" id="PS50873">
    <property type="entry name" value="PEROXIDASE_4"/>
    <property type="match status" value="1"/>
</dbReference>